<dbReference type="EC" id="2.3.3.13" evidence="1"/>
<dbReference type="EMBL" id="CP000462">
    <property type="protein sequence ID" value="ABK37558.1"/>
    <property type="molecule type" value="Genomic_DNA"/>
</dbReference>
<dbReference type="RefSeq" id="WP_011704822.1">
    <property type="nucleotide sequence ID" value="NC_008570.1"/>
</dbReference>
<dbReference type="RefSeq" id="YP_855423.1">
    <property type="nucleotide sequence ID" value="NC_008570.1"/>
</dbReference>
<dbReference type="SMR" id="A0KGM9"/>
<dbReference type="STRING" id="380703.AHA_0882"/>
<dbReference type="EnsemblBacteria" id="ABK37558">
    <property type="protein sequence ID" value="ABK37558"/>
    <property type="gene ID" value="AHA_0882"/>
</dbReference>
<dbReference type="GeneID" id="4488957"/>
<dbReference type="KEGG" id="aha:AHA_0882"/>
<dbReference type="PATRIC" id="fig|380703.7.peg.883"/>
<dbReference type="eggNOG" id="COG0119">
    <property type="taxonomic scope" value="Bacteria"/>
</dbReference>
<dbReference type="HOGENOM" id="CLU_022158_0_1_6"/>
<dbReference type="OrthoDB" id="9803573at2"/>
<dbReference type="UniPathway" id="UPA00048">
    <property type="reaction ID" value="UER00070"/>
</dbReference>
<dbReference type="Proteomes" id="UP000000756">
    <property type="component" value="Chromosome"/>
</dbReference>
<dbReference type="GO" id="GO:0005829">
    <property type="term" value="C:cytosol"/>
    <property type="evidence" value="ECO:0007669"/>
    <property type="project" value="TreeGrafter"/>
</dbReference>
<dbReference type="GO" id="GO:0003852">
    <property type="term" value="F:2-isopropylmalate synthase activity"/>
    <property type="evidence" value="ECO:0007669"/>
    <property type="project" value="UniProtKB-UniRule"/>
</dbReference>
<dbReference type="GO" id="GO:0003985">
    <property type="term" value="F:acetyl-CoA C-acetyltransferase activity"/>
    <property type="evidence" value="ECO:0007669"/>
    <property type="project" value="UniProtKB-UniRule"/>
</dbReference>
<dbReference type="GO" id="GO:0030145">
    <property type="term" value="F:manganese ion binding"/>
    <property type="evidence" value="ECO:0007669"/>
    <property type="project" value="UniProtKB-UniRule"/>
</dbReference>
<dbReference type="GO" id="GO:0009098">
    <property type="term" value="P:L-leucine biosynthetic process"/>
    <property type="evidence" value="ECO:0007669"/>
    <property type="project" value="UniProtKB-UniRule"/>
</dbReference>
<dbReference type="CDD" id="cd07940">
    <property type="entry name" value="DRE_TIM_IPMS"/>
    <property type="match status" value="1"/>
</dbReference>
<dbReference type="FunFam" id="1.10.238.260:FF:000001">
    <property type="entry name" value="2-isopropylmalate synthase"/>
    <property type="match status" value="1"/>
</dbReference>
<dbReference type="FunFam" id="3.20.20.70:FF:000010">
    <property type="entry name" value="2-isopropylmalate synthase"/>
    <property type="match status" value="1"/>
</dbReference>
<dbReference type="FunFam" id="3.30.160.270:FF:000001">
    <property type="entry name" value="2-isopropylmalate synthase"/>
    <property type="match status" value="1"/>
</dbReference>
<dbReference type="Gene3D" id="1.10.238.260">
    <property type="match status" value="1"/>
</dbReference>
<dbReference type="Gene3D" id="3.30.160.270">
    <property type="match status" value="1"/>
</dbReference>
<dbReference type="Gene3D" id="3.20.20.70">
    <property type="entry name" value="Aldolase class I"/>
    <property type="match status" value="1"/>
</dbReference>
<dbReference type="HAMAP" id="MF_01025">
    <property type="entry name" value="LeuA_type1"/>
    <property type="match status" value="1"/>
</dbReference>
<dbReference type="InterPro" id="IPR050073">
    <property type="entry name" value="2-IPM_HCS-like"/>
</dbReference>
<dbReference type="InterPro" id="IPR013709">
    <property type="entry name" value="2-isopropylmalate_synth_dimer"/>
</dbReference>
<dbReference type="InterPro" id="IPR002034">
    <property type="entry name" value="AIPM/Hcit_synth_CS"/>
</dbReference>
<dbReference type="InterPro" id="IPR013785">
    <property type="entry name" value="Aldolase_TIM"/>
</dbReference>
<dbReference type="InterPro" id="IPR054691">
    <property type="entry name" value="LeuA/HCS_post-cat"/>
</dbReference>
<dbReference type="InterPro" id="IPR036230">
    <property type="entry name" value="LeuA_allosteric_dom_sf"/>
</dbReference>
<dbReference type="InterPro" id="IPR005671">
    <property type="entry name" value="LeuA_bact_synth"/>
</dbReference>
<dbReference type="InterPro" id="IPR000891">
    <property type="entry name" value="PYR_CT"/>
</dbReference>
<dbReference type="NCBIfam" id="TIGR00973">
    <property type="entry name" value="leuA_bact"/>
    <property type="match status" value="1"/>
</dbReference>
<dbReference type="NCBIfam" id="NF002084">
    <property type="entry name" value="PRK00915.1-1"/>
    <property type="match status" value="1"/>
</dbReference>
<dbReference type="NCBIfam" id="NF002086">
    <property type="entry name" value="PRK00915.1-3"/>
    <property type="match status" value="1"/>
</dbReference>
<dbReference type="PANTHER" id="PTHR10277:SF9">
    <property type="entry name" value="2-ISOPROPYLMALATE SYNTHASE 1, CHLOROPLASTIC-RELATED"/>
    <property type="match status" value="1"/>
</dbReference>
<dbReference type="PANTHER" id="PTHR10277">
    <property type="entry name" value="HOMOCITRATE SYNTHASE-RELATED"/>
    <property type="match status" value="1"/>
</dbReference>
<dbReference type="Pfam" id="PF22617">
    <property type="entry name" value="HCS_D2"/>
    <property type="match status" value="1"/>
</dbReference>
<dbReference type="Pfam" id="PF00682">
    <property type="entry name" value="HMGL-like"/>
    <property type="match status" value="1"/>
</dbReference>
<dbReference type="Pfam" id="PF08502">
    <property type="entry name" value="LeuA_dimer"/>
    <property type="match status" value="1"/>
</dbReference>
<dbReference type="SMART" id="SM00917">
    <property type="entry name" value="LeuA_dimer"/>
    <property type="match status" value="1"/>
</dbReference>
<dbReference type="SUPFAM" id="SSF110921">
    <property type="entry name" value="2-isopropylmalate synthase LeuA, allosteric (dimerisation) domain"/>
    <property type="match status" value="1"/>
</dbReference>
<dbReference type="SUPFAM" id="SSF51569">
    <property type="entry name" value="Aldolase"/>
    <property type="match status" value="1"/>
</dbReference>
<dbReference type="PROSITE" id="PS00815">
    <property type="entry name" value="AIPM_HOMOCIT_SYNTH_1"/>
    <property type="match status" value="1"/>
</dbReference>
<dbReference type="PROSITE" id="PS00816">
    <property type="entry name" value="AIPM_HOMOCIT_SYNTH_2"/>
    <property type="match status" value="1"/>
</dbReference>
<dbReference type="PROSITE" id="PS50991">
    <property type="entry name" value="PYR_CT"/>
    <property type="match status" value="1"/>
</dbReference>
<accession>A0KGM9</accession>
<comment type="function">
    <text evidence="1">Catalyzes the condensation of the acetyl group of acetyl-CoA with 3-methyl-2-oxobutanoate (2-ketoisovalerate) to form 3-carboxy-3-hydroxy-4-methylpentanoate (2-isopropylmalate).</text>
</comment>
<comment type="catalytic activity">
    <reaction evidence="1">
        <text>3-methyl-2-oxobutanoate + acetyl-CoA + H2O = (2S)-2-isopropylmalate + CoA + H(+)</text>
        <dbReference type="Rhea" id="RHEA:21524"/>
        <dbReference type="ChEBI" id="CHEBI:1178"/>
        <dbReference type="ChEBI" id="CHEBI:11851"/>
        <dbReference type="ChEBI" id="CHEBI:15377"/>
        <dbReference type="ChEBI" id="CHEBI:15378"/>
        <dbReference type="ChEBI" id="CHEBI:57287"/>
        <dbReference type="ChEBI" id="CHEBI:57288"/>
        <dbReference type="EC" id="2.3.3.13"/>
    </reaction>
</comment>
<comment type="cofactor">
    <cofactor evidence="1">
        <name>Mn(2+)</name>
        <dbReference type="ChEBI" id="CHEBI:29035"/>
    </cofactor>
</comment>
<comment type="pathway">
    <text evidence="1">Amino-acid biosynthesis; L-leucine biosynthesis; L-leucine from 3-methyl-2-oxobutanoate: step 1/4.</text>
</comment>
<comment type="subunit">
    <text evidence="1">Homodimer.</text>
</comment>
<comment type="subcellular location">
    <subcellularLocation>
        <location evidence="1">Cytoplasm</location>
    </subcellularLocation>
</comment>
<comment type="similarity">
    <text evidence="1">Belongs to the alpha-IPM synthase/homocitrate synthase family. LeuA type 1 subfamily.</text>
</comment>
<reference key="1">
    <citation type="journal article" date="2006" name="J. Bacteriol.">
        <title>Genome sequence of Aeromonas hydrophila ATCC 7966T: jack of all trades.</title>
        <authorList>
            <person name="Seshadri R."/>
            <person name="Joseph S.W."/>
            <person name="Chopra A.K."/>
            <person name="Sha J."/>
            <person name="Shaw J."/>
            <person name="Graf J."/>
            <person name="Haft D.H."/>
            <person name="Wu M."/>
            <person name="Ren Q."/>
            <person name="Rosovitz M.J."/>
            <person name="Madupu R."/>
            <person name="Tallon L."/>
            <person name="Kim M."/>
            <person name="Jin S."/>
            <person name="Vuong H."/>
            <person name="Stine O.C."/>
            <person name="Ali A."/>
            <person name="Horneman A.J."/>
            <person name="Heidelberg J.F."/>
        </authorList>
    </citation>
    <scope>NUCLEOTIDE SEQUENCE [LARGE SCALE GENOMIC DNA]</scope>
    <source>
        <strain>ATCC 7966 / DSM 30187 / BCRC 13018 / CCUG 14551 / JCM 1027 / KCTC 2358 / NCIMB 9240 / NCTC 8049</strain>
    </source>
</reference>
<organism>
    <name type="scientific">Aeromonas hydrophila subsp. hydrophila (strain ATCC 7966 / DSM 30187 / BCRC 13018 / CCUG 14551 / JCM 1027 / KCTC 2358 / NCIMB 9240 / NCTC 8049)</name>
    <dbReference type="NCBI Taxonomy" id="380703"/>
    <lineage>
        <taxon>Bacteria</taxon>
        <taxon>Pseudomonadati</taxon>
        <taxon>Pseudomonadota</taxon>
        <taxon>Gammaproteobacteria</taxon>
        <taxon>Aeromonadales</taxon>
        <taxon>Aeromonadaceae</taxon>
        <taxon>Aeromonas</taxon>
    </lineage>
</organism>
<gene>
    <name evidence="1" type="primary">leuA</name>
    <name type="ordered locus">AHA_0882</name>
</gene>
<feature type="chain" id="PRO_1000149118" description="2-isopropylmalate synthase">
    <location>
        <begin position="1"/>
        <end position="524"/>
    </location>
</feature>
<feature type="domain" description="Pyruvate carboxyltransferase" evidence="1">
    <location>
        <begin position="5"/>
        <end position="267"/>
    </location>
</feature>
<feature type="region of interest" description="Regulatory domain" evidence="1">
    <location>
        <begin position="392"/>
        <end position="524"/>
    </location>
</feature>
<feature type="binding site" evidence="1">
    <location>
        <position position="14"/>
    </location>
    <ligand>
        <name>Mn(2+)</name>
        <dbReference type="ChEBI" id="CHEBI:29035"/>
    </ligand>
</feature>
<feature type="binding site" evidence="1">
    <location>
        <position position="202"/>
    </location>
    <ligand>
        <name>Mn(2+)</name>
        <dbReference type="ChEBI" id="CHEBI:29035"/>
    </ligand>
</feature>
<feature type="binding site" evidence="1">
    <location>
        <position position="204"/>
    </location>
    <ligand>
        <name>Mn(2+)</name>
        <dbReference type="ChEBI" id="CHEBI:29035"/>
    </ligand>
</feature>
<feature type="binding site" evidence="1">
    <location>
        <position position="238"/>
    </location>
    <ligand>
        <name>Mn(2+)</name>
        <dbReference type="ChEBI" id="CHEBI:29035"/>
    </ligand>
</feature>
<proteinExistence type="inferred from homology"/>
<name>LEU1_AERHH</name>
<sequence length="524" mass="57233">MSDRVIIFDTTLRDGEQALAASLTVKEKLQIAQALERLGVDVMEVGFPVSSPGDFQSVQTIARHIKQSRVCALARALPKDIDAAGEALRVAEAFRIHTFISTSSIHVESKLKKSFEDVLEMGVSAIKHARRYTDDVEFSCEDAGRTPIDNLCRMVEAAIKAGARTINIPDTVGYTVPTEFSGIIQTLFNRVPNIDQAIISVHCHDDLGLSVANSIGAVQMGARQIECTINGIGERAGNCSLEEVAMILKTRADLLGVHTNIRHSEIHRTSALVSQLCNMPVQPNKAIVGANAFSHSSGIHQDGVLKAKNTYEIITPESIGLTQNNLNMTSRSGRHVIKHRMESMGYAESSYDLDDLYGKFLTLADKKGQVFDYDLEALAFFSQIHEEPEHFKLEYLGVQSGSSVMATASVKLKVGQEIVSEAATGNGPVDAVYQCINRITGYEISIDKYELKGKGEGKNALGQVDIVAQYKGRKFHGMGLATDIIESSAQALIHVINSIWRADQVAEQMERNVAKTDKINTESV</sequence>
<evidence type="ECO:0000255" key="1">
    <source>
        <dbReference type="HAMAP-Rule" id="MF_01025"/>
    </source>
</evidence>
<keyword id="KW-0028">Amino-acid biosynthesis</keyword>
<keyword id="KW-0100">Branched-chain amino acid biosynthesis</keyword>
<keyword id="KW-0963">Cytoplasm</keyword>
<keyword id="KW-0432">Leucine biosynthesis</keyword>
<keyword id="KW-0464">Manganese</keyword>
<keyword id="KW-0479">Metal-binding</keyword>
<keyword id="KW-1185">Reference proteome</keyword>
<keyword id="KW-0808">Transferase</keyword>
<protein>
    <recommendedName>
        <fullName evidence="1">2-isopropylmalate synthase</fullName>
        <ecNumber evidence="1">2.3.3.13</ecNumber>
    </recommendedName>
    <alternativeName>
        <fullName evidence="1">Alpha-IPM synthase</fullName>
    </alternativeName>
    <alternativeName>
        <fullName evidence="1">Alpha-isopropylmalate synthase</fullName>
    </alternativeName>
</protein>